<organism>
    <name type="scientific">Pseudomonas syringae pv. syringae (strain B728a)</name>
    <dbReference type="NCBI Taxonomy" id="205918"/>
    <lineage>
        <taxon>Bacteria</taxon>
        <taxon>Pseudomonadati</taxon>
        <taxon>Pseudomonadota</taxon>
        <taxon>Gammaproteobacteria</taxon>
        <taxon>Pseudomonadales</taxon>
        <taxon>Pseudomonadaceae</taxon>
        <taxon>Pseudomonas</taxon>
        <taxon>Pseudomonas syringae</taxon>
    </lineage>
</organism>
<keyword id="KW-0574">Periplasm</keyword>
<keyword id="KW-0732">Signal</keyword>
<accession>Q4ZL60</accession>
<feature type="signal peptide" description="Tat-type signal" evidence="1">
    <location>
        <begin position="1"/>
        <end position="29"/>
    </location>
</feature>
<feature type="chain" id="PRO_1000064550" description="Glucans biosynthesis protein D">
    <location>
        <begin position="30"/>
        <end position="539"/>
    </location>
</feature>
<reference key="1">
    <citation type="journal article" date="2005" name="Proc. Natl. Acad. Sci. U.S.A.">
        <title>Comparison of the complete genome sequences of Pseudomonas syringae pv. syringae B728a and pv. tomato DC3000.</title>
        <authorList>
            <person name="Feil H."/>
            <person name="Feil W.S."/>
            <person name="Chain P."/>
            <person name="Larimer F."/>
            <person name="Dibartolo G."/>
            <person name="Copeland A."/>
            <person name="Lykidis A."/>
            <person name="Trong S."/>
            <person name="Nolan M."/>
            <person name="Goltsman E."/>
            <person name="Thiel J."/>
            <person name="Malfatti S."/>
            <person name="Loper J.E."/>
            <person name="Lapidus A."/>
            <person name="Detter J.C."/>
            <person name="Land M."/>
            <person name="Richardson P.M."/>
            <person name="Kyrpides N.C."/>
            <person name="Ivanova N."/>
            <person name="Lindow S.E."/>
        </authorList>
    </citation>
    <scope>NUCLEOTIDE SEQUENCE [LARGE SCALE GENOMIC DNA]</scope>
    <source>
        <strain>B728a</strain>
    </source>
</reference>
<gene>
    <name evidence="1" type="primary">opgD</name>
    <name type="ordered locus">Psyr_5085</name>
</gene>
<protein>
    <recommendedName>
        <fullName evidence="1">Glucans biosynthesis protein D</fullName>
    </recommendedName>
</protein>
<name>OPGD_PSEU2</name>
<proteinExistence type="inferred from homology"/>
<evidence type="ECO:0000255" key="1">
    <source>
        <dbReference type="HAMAP-Rule" id="MF_01068"/>
    </source>
</evidence>
<comment type="function">
    <text evidence="1">Probably involved in the control of the structural glucose backbone of osmoregulated periplasmic glucans (OPGs).</text>
</comment>
<comment type="pathway">
    <text evidence="1">Glycan metabolism; osmoregulated periplasmic glucan (OPG) biosynthesis.</text>
</comment>
<comment type="subcellular location">
    <subcellularLocation>
        <location evidence="1">Periplasm</location>
    </subcellularLocation>
</comment>
<comment type="PTM">
    <text>Predicted to be exported by the Tat system. The position of the signal peptide cleavage has not been experimentally proven.</text>
</comment>
<comment type="similarity">
    <text evidence="1">Belongs to the OpgD/OpgG family.</text>
</comment>
<dbReference type="EMBL" id="CP000075">
    <property type="protein sequence ID" value="AAY40112.1"/>
    <property type="molecule type" value="Genomic_DNA"/>
</dbReference>
<dbReference type="RefSeq" id="WP_003401346.1">
    <property type="nucleotide sequence ID" value="NC_007005.1"/>
</dbReference>
<dbReference type="RefSeq" id="YP_238150.1">
    <property type="nucleotide sequence ID" value="NC_007005.1"/>
</dbReference>
<dbReference type="SMR" id="Q4ZL60"/>
<dbReference type="STRING" id="205918.Psyr_5085"/>
<dbReference type="KEGG" id="psb:Psyr_5085"/>
<dbReference type="PATRIC" id="fig|205918.7.peg.5245"/>
<dbReference type="eggNOG" id="COG3131">
    <property type="taxonomic scope" value="Bacteria"/>
</dbReference>
<dbReference type="HOGENOM" id="CLU_023403_2_0_6"/>
<dbReference type="OrthoDB" id="335750at2"/>
<dbReference type="UniPathway" id="UPA00637"/>
<dbReference type="Proteomes" id="UP000000426">
    <property type="component" value="Chromosome"/>
</dbReference>
<dbReference type="GO" id="GO:0030288">
    <property type="term" value="C:outer membrane-bounded periplasmic space"/>
    <property type="evidence" value="ECO:0007669"/>
    <property type="project" value="TreeGrafter"/>
</dbReference>
<dbReference type="GO" id="GO:0030246">
    <property type="term" value="F:carbohydrate binding"/>
    <property type="evidence" value="ECO:0007669"/>
    <property type="project" value="InterPro"/>
</dbReference>
<dbReference type="GO" id="GO:0003824">
    <property type="term" value="F:catalytic activity"/>
    <property type="evidence" value="ECO:0007669"/>
    <property type="project" value="InterPro"/>
</dbReference>
<dbReference type="GO" id="GO:0051274">
    <property type="term" value="P:beta-glucan biosynthetic process"/>
    <property type="evidence" value="ECO:0007669"/>
    <property type="project" value="TreeGrafter"/>
</dbReference>
<dbReference type="Gene3D" id="2.70.98.10">
    <property type="match status" value="1"/>
</dbReference>
<dbReference type="Gene3D" id="2.60.40.10">
    <property type="entry name" value="Immunoglobulins"/>
    <property type="match status" value="1"/>
</dbReference>
<dbReference type="HAMAP" id="MF_01068">
    <property type="entry name" value="MdoD_OpgD"/>
    <property type="match status" value="1"/>
</dbReference>
<dbReference type="InterPro" id="IPR011013">
    <property type="entry name" value="Gal_mutarotase_sf_dom"/>
</dbReference>
<dbReference type="InterPro" id="IPR014718">
    <property type="entry name" value="GH-type_carb-bd"/>
</dbReference>
<dbReference type="InterPro" id="IPR023724">
    <property type="entry name" value="Glucan_biosyn_MdoD"/>
</dbReference>
<dbReference type="InterPro" id="IPR014438">
    <property type="entry name" value="Glucan_biosyn_MdoG/MdoD"/>
</dbReference>
<dbReference type="InterPro" id="IPR007444">
    <property type="entry name" value="Glucan_biosyn_MdoG_C"/>
</dbReference>
<dbReference type="InterPro" id="IPR013783">
    <property type="entry name" value="Ig-like_fold"/>
</dbReference>
<dbReference type="InterPro" id="IPR014756">
    <property type="entry name" value="Ig_E-set"/>
</dbReference>
<dbReference type="InterPro" id="IPR006311">
    <property type="entry name" value="TAT_signal"/>
</dbReference>
<dbReference type="PANTHER" id="PTHR30504">
    <property type="entry name" value="GLUCANS BIOSYNTHESIS PROTEIN"/>
    <property type="match status" value="1"/>
</dbReference>
<dbReference type="PANTHER" id="PTHR30504:SF3">
    <property type="entry name" value="GLUCANS BIOSYNTHESIS PROTEIN D"/>
    <property type="match status" value="1"/>
</dbReference>
<dbReference type="Pfam" id="PF04349">
    <property type="entry name" value="MdoG"/>
    <property type="match status" value="1"/>
</dbReference>
<dbReference type="PIRSF" id="PIRSF006281">
    <property type="entry name" value="MdoG"/>
    <property type="match status" value="1"/>
</dbReference>
<dbReference type="SUPFAM" id="SSF81296">
    <property type="entry name" value="E set domains"/>
    <property type="match status" value="1"/>
</dbReference>
<dbReference type="SUPFAM" id="SSF74650">
    <property type="entry name" value="Galactose mutarotase-like"/>
    <property type="match status" value="1"/>
</dbReference>
<dbReference type="PROSITE" id="PS51318">
    <property type="entry name" value="TAT"/>
    <property type="match status" value="1"/>
</dbReference>
<sequence length="539" mass="60572">MNRRNLLKASMALAAYGSVSASGLFAARALAAAADGEIEHFDFAELQAHAKKLASKGYVSNKQVLPPVLANMTPQQFNAIRYDPNHSLWKDVHGQLDVHFFHVGMGFKTPVRMYSVDPQSKQAREVHFRHDLFNYENSGIDKNLVKGDLGFAGFKLFKAPEIAINDVVSFLGASYFRAVDSNKQYGLSARGLAIDSYAKRQEEFPDFTKFWFETPDKNATRFVVYALLDSPSATGAYRFDIDCQAGQVVMEIDAHVNARTDIQQLGISPMTSMFSCGTHERRMCDTIHPQIHDSDRLSMWRGNGEWICRPLNNPAKPQFSAFSDTDPKGFGLVQSDHEFSSYQDTVVWYSRRPSLWVEPITAWGEGEVSLLELPTTGETMDNIVVFWTPKTPVKAGDSMNYGYKLFWSPLPPVSTPLAQVHATRSGMGGFLEGWAPGEHYPTTWARRFAVDFNGGGLDRLPEGTGIEPIVTVTHGKVQDFNILVLPDIKGYRVTFDWVPDSDSVEPVEMRMFIRTGDRTLSETWLYQYFPPAPDKRKYP</sequence>